<accession>P64244</accession>
<accession>P58613</accession>
<evidence type="ECO:0000255" key="1">
    <source>
        <dbReference type="HAMAP-Rule" id="MF_00525"/>
    </source>
</evidence>
<evidence type="ECO:0000305" key="2"/>
<proteinExistence type="inferred from homology"/>
<organism>
    <name type="scientific">Escherichia coli O157:H7</name>
    <dbReference type="NCBI Taxonomy" id="83334"/>
    <lineage>
        <taxon>Bacteria</taxon>
        <taxon>Pseudomonadati</taxon>
        <taxon>Pseudomonadota</taxon>
        <taxon>Gammaproteobacteria</taxon>
        <taxon>Enterobacterales</taxon>
        <taxon>Enterobacteriaceae</taxon>
        <taxon>Escherichia</taxon>
    </lineage>
</organism>
<sequence>MDHSLNSLNNFDFLARSFARMHAEGRPVDILAVTGNMDEEHRTWFCARYAWYCQQMMQTRELELEH</sequence>
<keyword id="KW-1185">Reference proteome</keyword>
<gene>
    <name type="primary">glgS</name>
    <name type="ordered locus">Z4401</name>
    <name type="ordered locus">ECs3931</name>
</gene>
<dbReference type="EMBL" id="AE005174">
    <property type="protein sequence ID" value="AAG58183.1"/>
    <property type="status" value="ALT_INIT"/>
    <property type="molecule type" value="Genomic_DNA"/>
</dbReference>
<dbReference type="EMBL" id="BA000007">
    <property type="protein sequence ID" value="BAB37354.1"/>
    <property type="molecule type" value="Genomic_DNA"/>
</dbReference>
<dbReference type="PIR" id="C85965">
    <property type="entry name" value="C85965"/>
</dbReference>
<dbReference type="PIR" id="C91120">
    <property type="entry name" value="C91120"/>
</dbReference>
<dbReference type="RefSeq" id="NP_311958.1">
    <property type="nucleotide sequence ID" value="NC_002695.1"/>
</dbReference>
<dbReference type="RefSeq" id="WP_001296424.1">
    <property type="nucleotide sequence ID" value="NZ_VOAI01000009.1"/>
</dbReference>
<dbReference type="SMR" id="P64244"/>
<dbReference type="STRING" id="155864.Z4401"/>
<dbReference type="GeneID" id="75173169"/>
<dbReference type="GeneID" id="916232"/>
<dbReference type="KEGG" id="ece:Z4401"/>
<dbReference type="KEGG" id="ecs:ECs_3931"/>
<dbReference type="PATRIC" id="fig|386585.9.peg.4100"/>
<dbReference type="eggNOG" id="ENOG5032ZQX">
    <property type="taxonomic scope" value="Bacteria"/>
</dbReference>
<dbReference type="HOGENOM" id="CLU_185971_0_0_6"/>
<dbReference type="OMA" id="HRSWFCK"/>
<dbReference type="Proteomes" id="UP000000558">
    <property type="component" value="Chromosome"/>
</dbReference>
<dbReference type="Proteomes" id="UP000002519">
    <property type="component" value="Chromosome"/>
</dbReference>
<dbReference type="GO" id="GO:1902201">
    <property type="term" value="P:negative regulation of bacterial-type flagellum-dependent cell motility"/>
    <property type="evidence" value="ECO:0007669"/>
    <property type="project" value="UniProtKB-UniRule"/>
</dbReference>
<dbReference type="GO" id="GO:1900191">
    <property type="term" value="P:negative regulation of single-species biofilm formation"/>
    <property type="evidence" value="ECO:0007669"/>
    <property type="project" value="UniProtKB-UniRule"/>
</dbReference>
<dbReference type="FunFam" id="1.20.970.20:FF:000001">
    <property type="entry name" value="Surface composition regulator"/>
    <property type="match status" value="1"/>
</dbReference>
<dbReference type="Gene3D" id="1.20.970.20">
    <property type="entry name" value="Glycogen synthesis protein GlgS"/>
    <property type="match status" value="1"/>
</dbReference>
<dbReference type="HAMAP" id="MF_00525">
    <property type="entry name" value="GlgS"/>
    <property type="match status" value="1"/>
</dbReference>
<dbReference type="InterPro" id="IPR015065">
    <property type="entry name" value="GlgS"/>
</dbReference>
<dbReference type="InterPro" id="IPR036295">
    <property type="entry name" value="GlgS_sf"/>
</dbReference>
<dbReference type="NCBIfam" id="NF002793">
    <property type="entry name" value="PRK02922.1"/>
    <property type="match status" value="1"/>
</dbReference>
<dbReference type="Pfam" id="PF08971">
    <property type="entry name" value="GlgS"/>
    <property type="match status" value="1"/>
</dbReference>
<dbReference type="SUPFAM" id="SSF109747">
    <property type="entry name" value="Glycogen synthesis protein GlgS"/>
    <property type="match status" value="1"/>
</dbReference>
<protein>
    <recommendedName>
        <fullName evidence="1">Surface composition regulator</fullName>
    </recommendedName>
</protein>
<name>GLGS_ECO57</name>
<reference key="1">
    <citation type="journal article" date="2001" name="Nature">
        <title>Genome sequence of enterohaemorrhagic Escherichia coli O157:H7.</title>
        <authorList>
            <person name="Perna N.T."/>
            <person name="Plunkett G. III"/>
            <person name="Burland V."/>
            <person name="Mau B."/>
            <person name="Glasner J.D."/>
            <person name="Rose D.J."/>
            <person name="Mayhew G.F."/>
            <person name="Evans P.S."/>
            <person name="Gregor J."/>
            <person name="Kirkpatrick H.A."/>
            <person name="Posfai G."/>
            <person name="Hackett J."/>
            <person name="Klink S."/>
            <person name="Boutin A."/>
            <person name="Shao Y."/>
            <person name="Miller L."/>
            <person name="Grotbeck E.J."/>
            <person name="Davis N.W."/>
            <person name="Lim A."/>
            <person name="Dimalanta E.T."/>
            <person name="Potamousis K."/>
            <person name="Apodaca J."/>
            <person name="Anantharaman T.S."/>
            <person name="Lin J."/>
            <person name="Yen G."/>
            <person name="Schwartz D.C."/>
            <person name="Welch R.A."/>
            <person name="Blattner F.R."/>
        </authorList>
    </citation>
    <scope>NUCLEOTIDE SEQUENCE [LARGE SCALE GENOMIC DNA]</scope>
    <source>
        <strain>O157:H7 / EDL933 / ATCC 700927 / EHEC</strain>
    </source>
</reference>
<reference key="2">
    <citation type="journal article" date="2001" name="DNA Res.">
        <title>Complete genome sequence of enterohemorrhagic Escherichia coli O157:H7 and genomic comparison with a laboratory strain K-12.</title>
        <authorList>
            <person name="Hayashi T."/>
            <person name="Makino K."/>
            <person name="Ohnishi M."/>
            <person name="Kurokawa K."/>
            <person name="Ishii K."/>
            <person name="Yokoyama K."/>
            <person name="Han C.-G."/>
            <person name="Ohtsubo E."/>
            <person name="Nakayama K."/>
            <person name="Murata T."/>
            <person name="Tanaka M."/>
            <person name="Tobe T."/>
            <person name="Iida T."/>
            <person name="Takami H."/>
            <person name="Honda T."/>
            <person name="Sasakawa C."/>
            <person name="Ogasawara N."/>
            <person name="Yasunaga T."/>
            <person name="Kuhara S."/>
            <person name="Shiba T."/>
            <person name="Hattori M."/>
            <person name="Shinagawa H."/>
        </authorList>
    </citation>
    <scope>NUCLEOTIDE SEQUENCE [LARGE SCALE GENOMIC DNA]</scope>
    <source>
        <strain>O157:H7 / Sakai / RIMD 0509952 / EHEC</strain>
    </source>
</reference>
<comment type="function">
    <text evidence="1">Major determinant of cell surface composition. Negatively regulates motility, adhesion and synthesis of biofilm exopolysaccharides.</text>
</comment>
<comment type="similarity">
    <text evidence="1">Belongs to the GlgS family.</text>
</comment>
<comment type="sequence caution" evidence="2">
    <conflict type="erroneous initiation">
        <sequence resource="EMBL-CDS" id="AAG58183"/>
    </conflict>
</comment>
<feature type="chain" id="PRO_0000071601" description="Surface composition regulator">
    <location>
        <begin position="1"/>
        <end position="66"/>
    </location>
</feature>